<keyword id="KW-0961">Cell wall biogenesis/degradation</keyword>
<keyword id="KW-0378">Hydrolase</keyword>
<keyword id="KW-0964">Secreted</keyword>
<keyword id="KW-0732">Signal</keyword>
<name>LYTH_STAAU</name>
<evidence type="ECO:0000255" key="1"/>
<evidence type="ECO:0000255" key="2">
    <source>
        <dbReference type="PROSITE-ProRule" id="PRU01117"/>
    </source>
</evidence>
<evidence type="ECO:0000256" key="3">
    <source>
        <dbReference type="SAM" id="MobiDB-lite"/>
    </source>
</evidence>
<evidence type="ECO:0000269" key="4">
    <source>
    </source>
</evidence>
<evidence type="ECO:0000305" key="5"/>
<proteinExistence type="inferred from homology"/>
<dbReference type="EC" id="3.5.1.-"/>
<dbReference type="EMBL" id="D76414">
    <property type="protein sequence ID" value="BAA23140.1"/>
    <property type="molecule type" value="Genomic_DNA"/>
</dbReference>
<dbReference type="RefSeq" id="WP_000717800.1">
    <property type="nucleotide sequence ID" value="NZ_WYDB01000002.1"/>
</dbReference>
<dbReference type="SMR" id="O32421"/>
<dbReference type="OMA" id="WHTNLNI"/>
<dbReference type="GO" id="GO:0005576">
    <property type="term" value="C:extracellular region"/>
    <property type="evidence" value="ECO:0007669"/>
    <property type="project" value="UniProtKB-SubCell"/>
</dbReference>
<dbReference type="GO" id="GO:0030288">
    <property type="term" value="C:outer membrane-bounded periplasmic space"/>
    <property type="evidence" value="ECO:0007669"/>
    <property type="project" value="TreeGrafter"/>
</dbReference>
<dbReference type="GO" id="GO:0008745">
    <property type="term" value="F:N-acetylmuramoyl-L-alanine amidase activity"/>
    <property type="evidence" value="ECO:0007669"/>
    <property type="project" value="InterPro"/>
</dbReference>
<dbReference type="GO" id="GO:0071555">
    <property type="term" value="P:cell wall organization"/>
    <property type="evidence" value="ECO:0007669"/>
    <property type="project" value="UniProtKB-KW"/>
</dbReference>
<dbReference type="GO" id="GO:0009253">
    <property type="term" value="P:peptidoglycan catabolic process"/>
    <property type="evidence" value="ECO:0007669"/>
    <property type="project" value="InterPro"/>
</dbReference>
<dbReference type="CDD" id="cd02696">
    <property type="entry name" value="MurNAc-LAA"/>
    <property type="match status" value="1"/>
</dbReference>
<dbReference type="Gene3D" id="2.30.30.40">
    <property type="entry name" value="SH3 Domains"/>
    <property type="match status" value="1"/>
</dbReference>
<dbReference type="Gene3D" id="3.40.630.40">
    <property type="entry name" value="Zn-dependent exopeptidases"/>
    <property type="match status" value="1"/>
</dbReference>
<dbReference type="InterPro" id="IPR017273">
    <property type="entry name" value="LytH"/>
</dbReference>
<dbReference type="InterPro" id="IPR002508">
    <property type="entry name" value="MurNAc-LAA_cat"/>
</dbReference>
<dbReference type="InterPro" id="IPR050695">
    <property type="entry name" value="N-acetylmuramoyl_amidase_3"/>
</dbReference>
<dbReference type="InterPro" id="IPR003646">
    <property type="entry name" value="SH3-like_bac-type"/>
</dbReference>
<dbReference type="PANTHER" id="PTHR30404:SF7">
    <property type="entry name" value="CELL WALL AMIDASE LYTH-RELATED"/>
    <property type="match status" value="1"/>
</dbReference>
<dbReference type="PANTHER" id="PTHR30404">
    <property type="entry name" value="N-ACETYLMURAMOYL-L-ALANINE AMIDASE"/>
    <property type="match status" value="1"/>
</dbReference>
<dbReference type="Pfam" id="PF01520">
    <property type="entry name" value="Amidase_3"/>
    <property type="match status" value="1"/>
</dbReference>
<dbReference type="Pfam" id="PF08239">
    <property type="entry name" value="SH3_3"/>
    <property type="match status" value="1"/>
</dbReference>
<dbReference type="PIRSF" id="PIRSF037730">
    <property type="entry name" value="CWA_LytH_prd"/>
    <property type="match status" value="1"/>
</dbReference>
<dbReference type="SMART" id="SM00646">
    <property type="entry name" value="Ami_3"/>
    <property type="match status" value="1"/>
</dbReference>
<dbReference type="SMART" id="SM00287">
    <property type="entry name" value="SH3b"/>
    <property type="match status" value="1"/>
</dbReference>
<dbReference type="SUPFAM" id="SSF53187">
    <property type="entry name" value="Zn-dependent exopeptidases"/>
    <property type="match status" value="1"/>
</dbReference>
<dbReference type="PROSITE" id="PS51781">
    <property type="entry name" value="SH3B"/>
    <property type="match status" value="1"/>
</dbReference>
<sequence length="291" mass="32694">MKKIEAWLSKKGLKNKRTLIVVIAFVLFIIFLFLLLNSNSEDSGNITITENAELRTGPNAAYPVIYKVEKGDHFKKIGKVGKWIEVEDTSSNEKGWIAGWHTNLDIVADNTKEKNPLQGKTIVLDPGHGGSDQGASSNTKYKSLEKDYTLKTAKELQRTLEKEGATVKMTRTDDTYVSLENRDIKGDAYLSIHNDALESSNANGMTVYWYHDNQRALADTLDATIQKKGLLSNRGSRQENYQVLRQTKVPAVLLELGYISNPTDETMIKDQLHRQILEQAIVDGLKIYFSA</sequence>
<accession>O32421</accession>
<feature type="signal peptide" evidence="1">
    <location>
        <begin position="1"/>
        <end position="40"/>
    </location>
</feature>
<feature type="chain" id="PRO_0000226280" description="Probable cell wall amidase LytH">
    <location>
        <begin position="41"/>
        <end position="291"/>
    </location>
</feature>
<feature type="domain" description="SH3b" evidence="2">
    <location>
        <begin position="41"/>
        <end position="105"/>
    </location>
</feature>
<feature type="domain" description="MurNAc-LAA" evidence="1">
    <location>
        <begin position="122"/>
        <end position="286"/>
    </location>
</feature>
<feature type="region of interest" description="Disordered" evidence="3">
    <location>
        <begin position="118"/>
        <end position="140"/>
    </location>
</feature>
<gene>
    <name type="primary">lytH</name>
</gene>
<comment type="function">
    <text evidence="4">Probably involved in cell-wall metabolism.</text>
</comment>
<comment type="subcellular location">
    <subcellularLocation>
        <location evidence="5">Secreted</location>
    </subcellularLocation>
</comment>
<comment type="miscellaneous">
    <text>Inactivation leads to increase of the methicillin resistance level.</text>
</comment>
<comment type="similarity">
    <text evidence="5">Belongs to the N-acetylmuramoyl-L-alanine amidase 3 family.</text>
</comment>
<protein>
    <recommendedName>
        <fullName>Probable cell wall amidase LytH</fullName>
        <ecNumber>3.5.1.-</ecNumber>
    </recommendedName>
</protein>
<reference key="1">
    <citation type="journal article" date="1997" name="J. Bacteriol.">
        <title>Increase of methicillin resistance in Staphylococcus aureus caused by deletion of a gene whose product is homologous to lytic enzymes.</title>
        <authorList>
            <person name="Fujimura T."/>
            <person name="Murakami K."/>
        </authorList>
    </citation>
    <scope>NUCLEOTIDE SEQUENCE [GENOMIC DNA]</scope>
    <scope>ROLE IN METHICILLIN RESISTANCE</scope>
    <source>
        <strain>SR17238</strain>
    </source>
</reference>
<organism>
    <name type="scientific">Staphylococcus aureus</name>
    <dbReference type="NCBI Taxonomy" id="1280"/>
    <lineage>
        <taxon>Bacteria</taxon>
        <taxon>Bacillati</taxon>
        <taxon>Bacillota</taxon>
        <taxon>Bacilli</taxon>
        <taxon>Bacillales</taxon>
        <taxon>Staphylococcaceae</taxon>
        <taxon>Staphylococcus</taxon>
    </lineage>
</organism>